<reference key="1">
    <citation type="journal article" date="1995" name="Nat. Genet.">
        <title>Analysis of the nucleotide sequence of chromosome VI from Saccharomyces cerevisiae.</title>
        <authorList>
            <person name="Murakami Y."/>
            <person name="Naitou M."/>
            <person name="Hagiwara H."/>
            <person name="Shibata T."/>
            <person name="Ozawa M."/>
            <person name="Sasanuma S."/>
            <person name="Sasanuma M."/>
            <person name="Tsuchiya Y."/>
            <person name="Soeda E."/>
            <person name="Yokoyama K."/>
            <person name="Yamazaki M."/>
            <person name="Tashiro H."/>
            <person name="Eki T."/>
        </authorList>
    </citation>
    <scope>NUCLEOTIDE SEQUENCE [LARGE SCALE GENOMIC DNA]</scope>
    <source>
        <strain>ATCC 204508 / S288c</strain>
    </source>
</reference>
<reference key="2">
    <citation type="journal article" date="2014" name="G3 (Bethesda)">
        <title>The reference genome sequence of Saccharomyces cerevisiae: Then and now.</title>
        <authorList>
            <person name="Engel S.R."/>
            <person name="Dietrich F.S."/>
            <person name="Fisk D.G."/>
            <person name="Binkley G."/>
            <person name="Balakrishnan R."/>
            <person name="Costanzo M.C."/>
            <person name="Dwight S.S."/>
            <person name="Hitz B.C."/>
            <person name="Karra K."/>
            <person name="Nash R.S."/>
            <person name="Weng S."/>
            <person name="Wong E.D."/>
            <person name="Lloyd P."/>
            <person name="Skrzypek M.S."/>
            <person name="Miyasato S.R."/>
            <person name="Simison M."/>
            <person name="Cherry J.M."/>
        </authorList>
    </citation>
    <scope>GENOME REANNOTATION</scope>
    <source>
        <strain>ATCC 204508 / S288c</strain>
    </source>
</reference>
<reference key="3">
    <citation type="journal article" date="2007" name="Genome Res.">
        <title>Approaching a complete repository of sequence-verified protein-encoding clones for Saccharomyces cerevisiae.</title>
        <authorList>
            <person name="Hu Y."/>
            <person name="Rolfs A."/>
            <person name="Bhullar B."/>
            <person name="Murthy T.V.S."/>
            <person name="Zhu C."/>
            <person name="Berger M.F."/>
            <person name="Camargo A.A."/>
            <person name="Kelley F."/>
            <person name="McCarron S."/>
            <person name="Jepson D."/>
            <person name="Richardson A."/>
            <person name="Raphael J."/>
            <person name="Moreira D."/>
            <person name="Taycher E."/>
            <person name="Zuo D."/>
            <person name="Mohr S."/>
            <person name="Kane M.F."/>
            <person name="Williamson J."/>
            <person name="Simpson A.J.G."/>
            <person name="Bulyk M.L."/>
            <person name="Harlow E."/>
            <person name="Marsischky G."/>
            <person name="Kolodner R.D."/>
            <person name="LaBaer J."/>
        </authorList>
    </citation>
    <scope>NUCLEOTIDE SEQUENCE [GENOMIC DNA]</scope>
    <source>
        <strain>ATCC 204508 / S288c</strain>
    </source>
</reference>
<reference key="4">
    <citation type="journal article" date="2003" name="J. Biol. Chem.">
        <title>Bipartite signals mediate subcellular targeting of tail-anchored membrane proteins in Saccharomyces cerevisiae.</title>
        <authorList>
            <person name="Beilharz T."/>
            <person name="Egan B."/>
            <person name="Silver P.A."/>
            <person name="Hofmann K."/>
            <person name="Lithgow T."/>
        </authorList>
    </citation>
    <scope>SUBCELLULAR LOCATION</scope>
</reference>
<reference key="5">
    <citation type="journal article" date="2003" name="Nature">
        <title>Global analysis of protein localization in budding yeast.</title>
        <authorList>
            <person name="Huh W.-K."/>
            <person name="Falvo J.V."/>
            <person name="Gerke L.C."/>
            <person name="Carroll A.S."/>
            <person name="Howson R.W."/>
            <person name="Weissman J.S."/>
            <person name="O'Shea E.K."/>
        </authorList>
    </citation>
    <scope>SUBCELLULAR LOCATION [LARGE SCALE ANALYSIS]</scope>
</reference>
<reference key="6">
    <citation type="journal article" date="2003" name="Proc. Natl. Acad. Sci. U.S.A.">
        <title>The proteome of Saccharomyces cerevisiae mitochondria.</title>
        <authorList>
            <person name="Sickmann A."/>
            <person name="Reinders J."/>
            <person name="Wagner Y."/>
            <person name="Joppich C."/>
            <person name="Zahedi R.P."/>
            <person name="Meyer H.E."/>
            <person name="Schoenfisch B."/>
            <person name="Perschil I."/>
            <person name="Chacinska A."/>
            <person name="Guiard B."/>
            <person name="Rehling P."/>
            <person name="Pfanner N."/>
            <person name="Meisinger C."/>
        </authorList>
    </citation>
    <scope>SUBCELLULAR LOCATION [LARGE SCALE ANALYSIS]</scope>
    <source>
        <strain>ATCC 76625 / YPH499</strain>
    </source>
</reference>
<name>FMP32_YEAST</name>
<protein>
    <recommendedName>
        <fullName>Protein FMP32, mitochondrial</fullName>
    </recommendedName>
    <alternativeName>
        <fullName>Found in mitochondrial proteome protein 32</fullName>
    </alternativeName>
</protein>
<comment type="subcellular location">
    <subcellularLocation>
        <location evidence="2 3 4">Mitochondrion</location>
    </subcellularLocation>
    <subcellularLocation>
        <location evidence="5">Membrane</location>
        <topology evidence="5">Single-pass membrane protein</topology>
    </subcellularLocation>
</comment>
<comment type="similarity">
    <text evidence="5">Belongs to the CCDC90 family.</text>
</comment>
<dbReference type="EMBL" id="D50617">
    <property type="protein sequence ID" value="BAA09195.1"/>
    <property type="molecule type" value="Genomic_DNA"/>
</dbReference>
<dbReference type="EMBL" id="AY558468">
    <property type="protein sequence ID" value="AAS56794.1"/>
    <property type="molecule type" value="Genomic_DNA"/>
</dbReference>
<dbReference type="EMBL" id="BK006940">
    <property type="protein sequence ID" value="DAA12394.1"/>
    <property type="molecule type" value="Genomic_DNA"/>
</dbReference>
<dbReference type="PIR" id="S56209">
    <property type="entry name" value="S56209"/>
</dbReference>
<dbReference type="RefSeq" id="NP_116608.1">
    <property type="nucleotide sequence ID" value="NM_001179921.1"/>
</dbReference>
<dbReference type="SMR" id="P43557"/>
<dbReference type="BioGRID" id="31101">
    <property type="interactions" value="70"/>
</dbReference>
<dbReference type="FunCoup" id="P43557">
    <property type="interactions" value="314"/>
</dbReference>
<dbReference type="IntAct" id="P43557">
    <property type="interactions" value="5"/>
</dbReference>
<dbReference type="MINT" id="P43557"/>
<dbReference type="STRING" id="4932.YFL046W"/>
<dbReference type="TCDB" id="9.B.466.1.1">
    <property type="family name" value="the duf1640 domain-containing protein (duf1640) family"/>
</dbReference>
<dbReference type="PaxDb" id="4932-YFL046W"/>
<dbReference type="PeptideAtlas" id="P43557"/>
<dbReference type="EnsemblFungi" id="YFL046W_mRNA">
    <property type="protein sequence ID" value="YFL046W"/>
    <property type="gene ID" value="YFL046W"/>
</dbReference>
<dbReference type="GeneID" id="850498"/>
<dbReference type="KEGG" id="sce:YFL046W"/>
<dbReference type="AGR" id="SGD:S000001848"/>
<dbReference type="SGD" id="S000001848">
    <property type="gene designation" value="FMP32"/>
</dbReference>
<dbReference type="VEuPathDB" id="FungiDB:YFL046W"/>
<dbReference type="eggNOG" id="KOG3156">
    <property type="taxonomic scope" value="Eukaryota"/>
</dbReference>
<dbReference type="HOGENOM" id="CLU_063283_2_0_1"/>
<dbReference type="InParanoid" id="P43557"/>
<dbReference type="OMA" id="MCSSTHN"/>
<dbReference type="OrthoDB" id="889336at2759"/>
<dbReference type="BioCyc" id="YEAST:G3O-30419-MONOMER"/>
<dbReference type="BioGRID-ORCS" id="850498">
    <property type="hits" value="9 hits in 10 CRISPR screens"/>
</dbReference>
<dbReference type="PRO" id="PR:P43557"/>
<dbReference type="Proteomes" id="UP000002311">
    <property type="component" value="Chromosome VI"/>
</dbReference>
<dbReference type="RNAct" id="P43557">
    <property type="molecule type" value="protein"/>
</dbReference>
<dbReference type="GO" id="GO:0005743">
    <property type="term" value="C:mitochondrial inner membrane"/>
    <property type="evidence" value="ECO:0000314"/>
    <property type="project" value="SGD"/>
</dbReference>
<dbReference type="GO" id="GO:0005739">
    <property type="term" value="C:mitochondrion"/>
    <property type="evidence" value="ECO:0000314"/>
    <property type="project" value="SGD"/>
</dbReference>
<dbReference type="GO" id="GO:0033617">
    <property type="term" value="P:mitochondrial cytochrome c oxidase assembly"/>
    <property type="evidence" value="ECO:0000315"/>
    <property type="project" value="SGD"/>
</dbReference>
<dbReference type="GO" id="GO:2000214">
    <property type="term" value="P:regulation of proline metabolic process"/>
    <property type="evidence" value="ECO:0000315"/>
    <property type="project" value="SGD"/>
</dbReference>
<dbReference type="FunFam" id="1.20.5.340:FF:000018">
    <property type="entry name" value="Mitochondrial protein FMP32"/>
    <property type="match status" value="1"/>
</dbReference>
<dbReference type="Gene3D" id="1.20.5.340">
    <property type="match status" value="1"/>
</dbReference>
<dbReference type="InterPro" id="IPR024461">
    <property type="entry name" value="CCDC90-like"/>
</dbReference>
<dbReference type="PANTHER" id="PTHR14360">
    <property type="entry name" value="PROTEIN FMP32, MITOCHONDRIAL"/>
    <property type="match status" value="1"/>
</dbReference>
<dbReference type="PANTHER" id="PTHR14360:SF1">
    <property type="entry name" value="PROTEIN FMP32, MITOCHONDRIAL"/>
    <property type="match status" value="1"/>
</dbReference>
<dbReference type="Pfam" id="PF07798">
    <property type="entry name" value="CCDC90-like"/>
    <property type="match status" value="1"/>
</dbReference>
<sequence>MLKRIVGLPARRCFHRTSFLLGSDFETVHIPNTNHFKDLLIENGKFQEDQATTIVEIMTDAIRGGVNHVSQDLAKREKLTQLSYQQRVDFAKLRDQLLSADRSEFHNIQNEYESVKNDLEKLRNKLREEITKTNAGFKLDLSLEKGRIREESSHHDLQIKEIDTKIEQEVTNMKMQIDSVKTQVMQWLIGVCTGTFALVLAYMRLLT</sequence>
<evidence type="ECO:0000255" key="1"/>
<evidence type="ECO:0000269" key="2">
    <source>
    </source>
</evidence>
<evidence type="ECO:0000269" key="3">
    <source>
    </source>
</evidence>
<evidence type="ECO:0000269" key="4">
    <source>
    </source>
</evidence>
<evidence type="ECO:0000305" key="5"/>
<feature type="transit peptide" description="Mitochondrion" evidence="1">
    <location>
        <begin position="1"/>
        <end status="unknown"/>
    </location>
</feature>
<feature type="chain" id="PRO_0000202671" description="Protein FMP32, mitochondrial">
    <location>
        <begin status="unknown"/>
        <end position="207"/>
    </location>
</feature>
<feature type="transmembrane region" description="Helical" evidence="1">
    <location>
        <begin position="184"/>
        <end position="206"/>
    </location>
</feature>
<feature type="coiled-coil region" evidence="1">
    <location>
        <begin position="100"/>
        <end position="136"/>
    </location>
</feature>
<organism>
    <name type="scientific">Saccharomyces cerevisiae (strain ATCC 204508 / S288c)</name>
    <name type="common">Baker's yeast</name>
    <dbReference type="NCBI Taxonomy" id="559292"/>
    <lineage>
        <taxon>Eukaryota</taxon>
        <taxon>Fungi</taxon>
        <taxon>Dikarya</taxon>
        <taxon>Ascomycota</taxon>
        <taxon>Saccharomycotina</taxon>
        <taxon>Saccharomycetes</taxon>
        <taxon>Saccharomycetales</taxon>
        <taxon>Saccharomycetaceae</taxon>
        <taxon>Saccharomyces</taxon>
    </lineage>
</organism>
<accession>P43557</accession>
<accession>D6VTI4</accession>
<keyword id="KW-0175">Coiled coil</keyword>
<keyword id="KW-0472">Membrane</keyword>
<keyword id="KW-0496">Mitochondrion</keyword>
<keyword id="KW-1185">Reference proteome</keyword>
<keyword id="KW-0809">Transit peptide</keyword>
<keyword id="KW-0812">Transmembrane</keyword>
<keyword id="KW-1133">Transmembrane helix</keyword>
<proteinExistence type="evidence at protein level"/>
<gene>
    <name type="primary">FMP32</name>
    <name type="ordered locus">YFL046W</name>
</gene>